<proteinExistence type="evidence at protein level"/>
<keyword id="KW-0027">Amidation</keyword>
<keyword id="KW-0878">Amphibian defense peptide</keyword>
<keyword id="KW-0903">Direct protein sequencing</keyword>
<keyword id="KW-0382">Hypotensive agent</keyword>
<keyword id="KW-0873">Pyrrolidone carboxylic acid</keyword>
<keyword id="KW-0964">Secreted</keyword>
<keyword id="KW-0765">Sulfation</keyword>
<accession>P62541</accession>
<accession>P82086</accession>
<sequence length="10" mass="1306">QQDYTGWFDF</sequence>
<feature type="peptide" id="PRO_0000043879" description="Caerulein-1.2">
    <location>
        <begin position="1"/>
        <end position="10"/>
    </location>
</feature>
<feature type="modified residue" description="Pyrrolidone carboxylic acid" evidence="2">
    <location>
        <position position="1"/>
    </location>
</feature>
<feature type="modified residue" description="Sulfotyrosine" evidence="1">
    <location>
        <position position="4"/>
    </location>
</feature>
<feature type="modified residue" description="Phenylalanine amide" evidence="2">
    <location>
        <position position="10"/>
    </location>
</feature>
<protein>
    <recommendedName>
        <fullName>Caerulein-1.2</fullName>
    </recommendedName>
</protein>
<reference key="1">
    <citation type="journal article" date="2000" name="Eur. J. Biochem.">
        <title>Differences in the skin peptides of the male and female Australian tree frog Litoria splendida. The discovery of the aquatic male sex pheromone splendipherin, together with Phe8 caerulein and a new antibiotic peptide caerin 1.10.</title>
        <authorList>
            <person name="Wabnitz P.A."/>
            <person name="Bowie J.H."/>
            <person name="Tyler M.J."/>
            <person name="Wallace J.C."/>
            <person name="Smith B.P."/>
        </authorList>
    </citation>
    <scope>PROTEIN SEQUENCE</scope>
    <scope>PYROGLUTAMATE FORMATION AT GLN-1</scope>
    <scope>AMIDATION AT PHE-10</scope>
    <scope>MASS SPECTROMETRY</scope>
    <source>
        <tissue>Skin secretion</tissue>
    </source>
</reference>
<comment type="function">
    <text evidence="3">Hypotensive neuropeptide.</text>
</comment>
<comment type="subcellular location">
    <subcellularLocation>
        <location>Secreted</location>
    </subcellularLocation>
</comment>
<comment type="tissue specificity">
    <text>Expressed by the skin dorsal glands.</text>
</comment>
<comment type="mass spectrometry" mass="1366.0" method="Electrospray" evidence="2"/>
<comment type="similarity">
    <text evidence="3">Belongs to the gastrin/cholecystokinin family.</text>
</comment>
<name>CAE12_RANSP</name>
<organism>
    <name type="scientific">Ranoidea splendida</name>
    <name type="common">Magnificent tree frog</name>
    <name type="synonym">Litoria splendida</name>
    <dbReference type="NCBI Taxonomy" id="30345"/>
    <lineage>
        <taxon>Eukaryota</taxon>
        <taxon>Metazoa</taxon>
        <taxon>Chordata</taxon>
        <taxon>Craniata</taxon>
        <taxon>Vertebrata</taxon>
        <taxon>Euteleostomi</taxon>
        <taxon>Amphibia</taxon>
        <taxon>Batrachia</taxon>
        <taxon>Anura</taxon>
        <taxon>Neobatrachia</taxon>
        <taxon>Hyloidea</taxon>
        <taxon>Hylidae</taxon>
        <taxon>Pelodryadinae</taxon>
        <taxon>Ranoidea</taxon>
    </lineage>
</organism>
<dbReference type="GO" id="GO:0005576">
    <property type="term" value="C:extracellular region"/>
    <property type="evidence" value="ECO:0007669"/>
    <property type="project" value="UniProtKB-SubCell"/>
</dbReference>
<dbReference type="GO" id="GO:0006952">
    <property type="term" value="P:defense response"/>
    <property type="evidence" value="ECO:0007669"/>
    <property type="project" value="UniProtKB-KW"/>
</dbReference>
<dbReference type="GO" id="GO:0008217">
    <property type="term" value="P:regulation of blood pressure"/>
    <property type="evidence" value="ECO:0007669"/>
    <property type="project" value="UniProtKB-KW"/>
</dbReference>
<evidence type="ECO:0000250" key="1"/>
<evidence type="ECO:0000269" key="2">
    <source>
    </source>
</evidence>
<evidence type="ECO:0000305" key="3"/>